<evidence type="ECO:0000255" key="1">
    <source>
        <dbReference type="HAMAP-Rule" id="MF_03116"/>
    </source>
</evidence>
<protein>
    <recommendedName>
        <fullName evidence="1">Probable methylthioribulose-1-phosphate dehydratase</fullName>
        <shortName evidence="1">MTRu-1-P dehydratase</shortName>
        <ecNumber evidence="1">4.2.1.109</ecNumber>
    </recommendedName>
</protein>
<name>MTNB_DROAN</name>
<sequence>MSLSIFKDLPEEHPRHLIPSLCRQFYHLGWVTGTGGGMSIKHNDEIYIAPSGVQKERMQPEDLFVQDITGKDLQLPPEIRGLKKSQCTPLFMLAYQHRGAGAVIHTHSQHAVMATLLWPGKTFRCTHLEMIKGVYDEADKRYLRYDEELVVPIIENTPFERDLADSMYAAMMEYPGCSAILVRRHGVYVWGQTWEKAKTMSECYDYLFSIAVEMKKAGIDPEKFEST</sequence>
<accession>B3MW09</accession>
<proteinExistence type="inferred from homology"/>
<comment type="function">
    <text evidence="1">Catalyzes the dehydration of methylthioribulose-1-phosphate (MTRu-1-P) into 2,3-diketo-5-methylthiopentyl-1-phosphate (DK-MTP-1-P).</text>
</comment>
<comment type="catalytic activity">
    <reaction evidence="1">
        <text>5-(methylsulfanyl)-D-ribulose 1-phosphate = 5-methylsulfanyl-2,3-dioxopentyl phosphate + H2O</text>
        <dbReference type="Rhea" id="RHEA:15549"/>
        <dbReference type="ChEBI" id="CHEBI:15377"/>
        <dbReference type="ChEBI" id="CHEBI:58548"/>
        <dbReference type="ChEBI" id="CHEBI:58828"/>
        <dbReference type="EC" id="4.2.1.109"/>
    </reaction>
</comment>
<comment type="cofactor">
    <cofactor evidence="1">
        <name>Zn(2+)</name>
        <dbReference type="ChEBI" id="CHEBI:29105"/>
    </cofactor>
    <text evidence="1">Binds 1 zinc ion per subunit.</text>
</comment>
<comment type="pathway">
    <text evidence="1">Amino-acid biosynthesis; L-methionine biosynthesis via salvage pathway; L-methionine from S-methyl-5-thio-alpha-D-ribose 1-phosphate: step 2/6.</text>
</comment>
<comment type="subcellular location">
    <subcellularLocation>
        <location evidence="1">Cytoplasm</location>
    </subcellularLocation>
</comment>
<comment type="similarity">
    <text evidence="1">Belongs to the aldolase class II family. MtnB subfamily.</text>
</comment>
<feature type="chain" id="PRO_0000393780" description="Probable methylthioribulose-1-phosphate dehydratase">
    <location>
        <begin position="1"/>
        <end position="227"/>
    </location>
</feature>
<feature type="active site" description="Proton donor/acceptor" evidence="1">
    <location>
        <position position="129"/>
    </location>
</feature>
<feature type="binding site" evidence="1">
    <location>
        <position position="87"/>
    </location>
    <ligand>
        <name>substrate</name>
    </ligand>
</feature>
<feature type="binding site" evidence="1">
    <location>
        <position position="105"/>
    </location>
    <ligand>
        <name>Zn(2+)</name>
        <dbReference type="ChEBI" id="CHEBI:29105"/>
    </ligand>
</feature>
<feature type="binding site" evidence="1">
    <location>
        <position position="107"/>
    </location>
    <ligand>
        <name>Zn(2+)</name>
        <dbReference type="ChEBI" id="CHEBI:29105"/>
    </ligand>
</feature>
<feature type="binding site" evidence="1">
    <location>
        <position position="185"/>
    </location>
    <ligand>
        <name>Zn(2+)</name>
        <dbReference type="ChEBI" id="CHEBI:29105"/>
    </ligand>
</feature>
<keyword id="KW-0028">Amino-acid biosynthesis</keyword>
<keyword id="KW-0963">Cytoplasm</keyword>
<keyword id="KW-0456">Lyase</keyword>
<keyword id="KW-0479">Metal-binding</keyword>
<keyword id="KW-0486">Methionine biosynthesis</keyword>
<keyword id="KW-1185">Reference proteome</keyword>
<keyword id="KW-0862">Zinc</keyword>
<reference key="1">
    <citation type="journal article" date="2007" name="Nature">
        <title>Evolution of genes and genomes on the Drosophila phylogeny.</title>
        <authorList>
            <consortium name="Drosophila 12 genomes consortium"/>
        </authorList>
    </citation>
    <scope>NUCLEOTIDE SEQUENCE [LARGE SCALE GENOMIC DNA]</scope>
    <source>
        <strain>Tucson 14024-0371.13</strain>
    </source>
</reference>
<gene>
    <name type="ORF">GF22600</name>
</gene>
<dbReference type="EC" id="4.2.1.109" evidence="1"/>
<dbReference type="EMBL" id="CH902625">
    <property type="protein sequence ID" value="EDV35154.1"/>
    <property type="molecule type" value="Genomic_DNA"/>
</dbReference>
<dbReference type="SMR" id="B3MW09"/>
<dbReference type="FunCoup" id="B3MW09">
    <property type="interactions" value="932"/>
</dbReference>
<dbReference type="STRING" id="7217.B3MW09"/>
<dbReference type="EnsemblMetazoa" id="FBtr0127300">
    <property type="protein sequence ID" value="FBpp0125792"/>
    <property type="gene ID" value="FBgn0099594"/>
</dbReference>
<dbReference type="EnsemblMetazoa" id="XM_001965603.4">
    <property type="protein sequence ID" value="XP_001965639.1"/>
    <property type="gene ID" value="LOC6505257"/>
</dbReference>
<dbReference type="GeneID" id="6505257"/>
<dbReference type="KEGG" id="dan:6505257"/>
<dbReference type="eggNOG" id="KOG2631">
    <property type="taxonomic scope" value="Eukaryota"/>
</dbReference>
<dbReference type="HOGENOM" id="CLU_006033_4_0_1"/>
<dbReference type="InParanoid" id="B3MW09"/>
<dbReference type="OMA" id="WFPGTSG"/>
<dbReference type="OrthoDB" id="191080at2759"/>
<dbReference type="PhylomeDB" id="B3MW09"/>
<dbReference type="UniPathway" id="UPA00904">
    <property type="reaction ID" value="UER00875"/>
</dbReference>
<dbReference type="Proteomes" id="UP000007801">
    <property type="component" value="Unassembled WGS sequence"/>
</dbReference>
<dbReference type="GO" id="GO:0005737">
    <property type="term" value="C:cytoplasm"/>
    <property type="evidence" value="ECO:0007669"/>
    <property type="project" value="UniProtKB-SubCell"/>
</dbReference>
<dbReference type="GO" id="GO:0046570">
    <property type="term" value="F:methylthioribulose 1-phosphate dehydratase activity"/>
    <property type="evidence" value="ECO:0000250"/>
    <property type="project" value="UniProtKB"/>
</dbReference>
<dbReference type="GO" id="GO:0008270">
    <property type="term" value="F:zinc ion binding"/>
    <property type="evidence" value="ECO:0000250"/>
    <property type="project" value="UniProtKB"/>
</dbReference>
<dbReference type="GO" id="GO:0019509">
    <property type="term" value="P:L-methionine salvage from methylthioadenosine"/>
    <property type="evidence" value="ECO:0007669"/>
    <property type="project" value="UniProtKB-UniRule"/>
</dbReference>
<dbReference type="FunFam" id="3.40.225.10:FF:000003">
    <property type="entry name" value="Methylthioribulose-1-phosphate dehydratase"/>
    <property type="match status" value="1"/>
</dbReference>
<dbReference type="Gene3D" id="3.40.225.10">
    <property type="entry name" value="Class II aldolase/adducin N-terminal domain"/>
    <property type="match status" value="1"/>
</dbReference>
<dbReference type="HAMAP" id="MF_03116">
    <property type="entry name" value="Salvage_MtnB_euk"/>
    <property type="match status" value="1"/>
</dbReference>
<dbReference type="InterPro" id="IPR001303">
    <property type="entry name" value="Aldolase_II/adducin_N"/>
</dbReference>
<dbReference type="InterPro" id="IPR036409">
    <property type="entry name" value="Aldolase_II/adducin_N_sf"/>
</dbReference>
<dbReference type="InterPro" id="IPR017714">
    <property type="entry name" value="MethylthioRu-1-P_deHdtase_MtnB"/>
</dbReference>
<dbReference type="InterPro" id="IPR027514">
    <property type="entry name" value="Salvage_MtnB_euk"/>
</dbReference>
<dbReference type="NCBIfam" id="TIGR03328">
    <property type="entry name" value="salvage_mtnB"/>
    <property type="match status" value="1"/>
</dbReference>
<dbReference type="PANTHER" id="PTHR10640">
    <property type="entry name" value="METHYLTHIORIBULOSE-1-PHOSPHATE DEHYDRATASE"/>
    <property type="match status" value="1"/>
</dbReference>
<dbReference type="PANTHER" id="PTHR10640:SF7">
    <property type="entry name" value="METHYLTHIORIBULOSE-1-PHOSPHATE DEHYDRATASE"/>
    <property type="match status" value="1"/>
</dbReference>
<dbReference type="Pfam" id="PF00596">
    <property type="entry name" value="Aldolase_II"/>
    <property type="match status" value="1"/>
</dbReference>
<dbReference type="SMART" id="SM01007">
    <property type="entry name" value="Aldolase_II"/>
    <property type="match status" value="1"/>
</dbReference>
<dbReference type="SUPFAM" id="SSF53639">
    <property type="entry name" value="AraD/HMP-PK domain-like"/>
    <property type="match status" value="1"/>
</dbReference>
<organism>
    <name type="scientific">Drosophila ananassae</name>
    <name type="common">Fruit fly</name>
    <dbReference type="NCBI Taxonomy" id="7217"/>
    <lineage>
        <taxon>Eukaryota</taxon>
        <taxon>Metazoa</taxon>
        <taxon>Ecdysozoa</taxon>
        <taxon>Arthropoda</taxon>
        <taxon>Hexapoda</taxon>
        <taxon>Insecta</taxon>
        <taxon>Pterygota</taxon>
        <taxon>Neoptera</taxon>
        <taxon>Endopterygota</taxon>
        <taxon>Diptera</taxon>
        <taxon>Brachycera</taxon>
        <taxon>Muscomorpha</taxon>
        <taxon>Ephydroidea</taxon>
        <taxon>Drosophilidae</taxon>
        <taxon>Drosophila</taxon>
        <taxon>Sophophora</taxon>
    </lineage>
</organism>